<protein>
    <recommendedName>
        <fullName evidence="2">Purine nucleoside phosphorylase DeoD-type</fullName>
        <shortName evidence="2">PNP</shortName>
        <ecNumber evidence="2">2.4.2.1</ecNumber>
    </recommendedName>
</protein>
<name>DEOD_COLP3</name>
<feature type="chain" id="PRO_0000063128" description="Purine nucleoside phosphorylase DeoD-type">
    <location>
        <begin position="1"/>
        <end position="234"/>
    </location>
</feature>
<feature type="active site" description="Proton donor" evidence="2">
    <location>
        <position position="205"/>
    </location>
</feature>
<feature type="binding site" evidence="1">
    <location>
        <position position="5"/>
    </location>
    <ligand>
        <name>a purine D-ribonucleoside</name>
        <dbReference type="ChEBI" id="CHEBI:142355"/>
        <note>ligand shared between dimeric partners</note>
    </ligand>
</feature>
<feature type="binding site" description="in other chain" evidence="1">
    <location>
        <position position="21"/>
    </location>
    <ligand>
        <name>phosphate</name>
        <dbReference type="ChEBI" id="CHEBI:43474"/>
        <note>ligand shared between dimeric partners</note>
    </ligand>
</feature>
<feature type="binding site" description="in other chain" evidence="1">
    <location>
        <position position="25"/>
    </location>
    <ligand>
        <name>phosphate</name>
        <dbReference type="ChEBI" id="CHEBI:43474"/>
        <note>ligand shared between dimeric partners</note>
    </ligand>
</feature>
<feature type="binding site" evidence="1">
    <location>
        <position position="44"/>
    </location>
    <ligand>
        <name>phosphate</name>
        <dbReference type="ChEBI" id="CHEBI:43474"/>
        <note>ligand shared between dimeric partners</note>
    </ligand>
</feature>
<feature type="binding site" description="in other chain" evidence="1">
    <location>
        <begin position="88"/>
        <end position="91"/>
    </location>
    <ligand>
        <name>phosphate</name>
        <dbReference type="ChEBI" id="CHEBI:43474"/>
        <note>ligand shared between dimeric partners</note>
    </ligand>
</feature>
<feature type="binding site" description="in other chain" evidence="1">
    <location>
        <begin position="180"/>
        <end position="182"/>
    </location>
    <ligand>
        <name>a purine D-ribonucleoside</name>
        <dbReference type="ChEBI" id="CHEBI:142355"/>
        <note>ligand shared between dimeric partners</note>
    </ligand>
</feature>
<feature type="binding site" description="in other chain" evidence="1">
    <location>
        <begin position="204"/>
        <end position="205"/>
    </location>
    <ligand>
        <name>a purine D-ribonucleoside</name>
        <dbReference type="ChEBI" id="CHEBI:142355"/>
        <note>ligand shared between dimeric partners</note>
    </ligand>
</feature>
<feature type="site" description="Important for catalytic activity" evidence="2">
    <location>
        <position position="218"/>
    </location>
</feature>
<accession>Q483Q8</accession>
<reference key="1">
    <citation type="journal article" date="2005" name="Proc. Natl. Acad. Sci. U.S.A.">
        <title>The psychrophilic lifestyle as revealed by the genome sequence of Colwellia psychrerythraea 34H through genomic and proteomic analyses.</title>
        <authorList>
            <person name="Methe B.A."/>
            <person name="Nelson K.E."/>
            <person name="Deming J.W."/>
            <person name="Momen B."/>
            <person name="Melamud E."/>
            <person name="Zhang X."/>
            <person name="Moult J."/>
            <person name="Madupu R."/>
            <person name="Nelson W.C."/>
            <person name="Dodson R.J."/>
            <person name="Brinkac L.M."/>
            <person name="Daugherty S.C."/>
            <person name="Durkin A.S."/>
            <person name="DeBoy R.T."/>
            <person name="Kolonay J.F."/>
            <person name="Sullivan S.A."/>
            <person name="Zhou L."/>
            <person name="Davidsen T.M."/>
            <person name="Wu M."/>
            <person name="Huston A.L."/>
            <person name="Lewis M."/>
            <person name="Weaver B."/>
            <person name="Weidman J.F."/>
            <person name="Khouri H."/>
            <person name="Utterback T.R."/>
            <person name="Feldblyum T.V."/>
            <person name="Fraser C.M."/>
        </authorList>
    </citation>
    <scope>NUCLEOTIDE SEQUENCE [LARGE SCALE GENOMIC DNA]</scope>
    <source>
        <strain>34H / ATCC BAA-681</strain>
    </source>
</reference>
<sequence>MPTPHIEAQDGEFAETVLMPGDPLRAKFIADNFLDDAKCITQVRNMLGYTGTYKGKRVSVMGSGMGVPSISIYATELYKDYGVEKIIRIGSCGAVRDDIKIRDIVIGMAASTDSNVNRQRFHNVDFAACADFSLLKSVVDTAEKLGKPVHVGNIFTADLFYTPQPEKFATMEKYGILAVEMEAAGLYGVAAEYGKKALTVLTVSDHIKTGEKTTSEERETTFKDMMELTLESVL</sequence>
<keyword id="KW-0328">Glycosyltransferase</keyword>
<keyword id="KW-0808">Transferase</keyword>
<proteinExistence type="inferred from homology"/>
<comment type="function">
    <text evidence="2">Catalyzes the reversible phosphorolytic breakdown of the N-glycosidic bond in the beta-(deoxy)ribonucleoside molecules, with the formation of the corresponding free purine bases and pentose-1-phosphate.</text>
</comment>
<comment type="catalytic activity">
    <reaction evidence="2">
        <text>a purine D-ribonucleoside + phosphate = a purine nucleobase + alpha-D-ribose 1-phosphate</text>
        <dbReference type="Rhea" id="RHEA:19805"/>
        <dbReference type="ChEBI" id="CHEBI:26386"/>
        <dbReference type="ChEBI" id="CHEBI:43474"/>
        <dbReference type="ChEBI" id="CHEBI:57720"/>
        <dbReference type="ChEBI" id="CHEBI:142355"/>
        <dbReference type="EC" id="2.4.2.1"/>
    </reaction>
</comment>
<comment type="catalytic activity">
    <reaction evidence="2">
        <text>a purine 2'-deoxy-D-ribonucleoside + phosphate = a purine nucleobase + 2-deoxy-alpha-D-ribose 1-phosphate</text>
        <dbReference type="Rhea" id="RHEA:36431"/>
        <dbReference type="ChEBI" id="CHEBI:26386"/>
        <dbReference type="ChEBI" id="CHEBI:43474"/>
        <dbReference type="ChEBI" id="CHEBI:57259"/>
        <dbReference type="ChEBI" id="CHEBI:142361"/>
        <dbReference type="EC" id="2.4.2.1"/>
    </reaction>
</comment>
<comment type="subunit">
    <text evidence="2">Homohexamer; trimer of homodimers.</text>
</comment>
<comment type="similarity">
    <text evidence="2">Belongs to the PNP/UDP phosphorylase family.</text>
</comment>
<gene>
    <name evidence="2" type="primary">deoD</name>
    <name type="ordered locus">CPS_1978</name>
</gene>
<dbReference type="EC" id="2.4.2.1" evidence="2"/>
<dbReference type="EMBL" id="CP000083">
    <property type="protein sequence ID" value="AAZ28267.1"/>
    <property type="molecule type" value="Genomic_DNA"/>
</dbReference>
<dbReference type="RefSeq" id="WP_011042802.1">
    <property type="nucleotide sequence ID" value="NC_003910.7"/>
</dbReference>
<dbReference type="SMR" id="Q483Q8"/>
<dbReference type="STRING" id="167879.CPS_1978"/>
<dbReference type="KEGG" id="cps:CPS_1978"/>
<dbReference type="eggNOG" id="COG0813">
    <property type="taxonomic scope" value="Bacteria"/>
</dbReference>
<dbReference type="HOGENOM" id="CLU_068457_2_0_6"/>
<dbReference type="Proteomes" id="UP000000547">
    <property type="component" value="Chromosome"/>
</dbReference>
<dbReference type="GO" id="GO:0005829">
    <property type="term" value="C:cytosol"/>
    <property type="evidence" value="ECO:0007669"/>
    <property type="project" value="TreeGrafter"/>
</dbReference>
<dbReference type="GO" id="GO:0004731">
    <property type="term" value="F:purine-nucleoside phosphorylase activity"/>
    <property type="evidence" value="ECO:0007669"/>
    <property type="project" value="UniProtKB-UniRule"/>
</dbReference>
<dbReference type="GO" id="GO:0006152">
    <property type="term" value="P:purine nucleoside catabolic process"/>
    <property type="evidence" value="ECO:0007669"/>
    <property type="project" value="TreeGrafter"/>
</dbReference>
<dbReference type="CDD" id="cd09006">
    <property type="entry name" value="PNP_EcPNPI-like"/>
    <property type="match status" value="1"/>
</dbReference>
<dbReference type="Gene3D" id="3.40.50.1580">
    <property type="entry name" value="Nucleoside phosphorylase domain"/>
    <property type="match status" value="1"/>
</dbReference>
<dbReference type="HAMAP" id="MF_01627">
    <property type="entry name" value="Pur_nucleosid_phosp"/>
    <property type="match status" value="1"/>
</dbReference>
<dbReference type="InterPro" id="IPR004402">
    <property type="entry name" value="DeoD-type"/>
</dbReference>
<dbReference type="InterPro" id="IPR018016">
    <property type="entry name" value="Nucleoside_phosphorylase_CS"/>
</dbReference>
<dbReference type="InterPro" id="IPR000845">
    <property type="entry name" value="Nucleoside_phosphorylase_d"/>
</dbReference>
<dbReference type="InterPro" id="IPR035994">
    <property type="entry name" value="Nucleoside_phosphorylase_sf"/>
</dbReference>
<dbReference type="NCBIfam" id="TIGR00107">
    <property type="entry name" value="deoD"/>
    <property type="match status" value="1"/>
</dbReference>
<dbReference type="NCBIfam" id="NF004489">
    <property type="entry name" value="PRK05819.1"/>
    <property type="match status" value="1"/>
</dbReference>
<dbReference type="NCBIfam" id="NF009914">
    <property type="entry name" value="PRK13374.1"/>
    <property type="match status" value="1"/>
</dbReference>
<dbReference type="PANTHER" id="PTHR43691:SF2">
    <property type="entry name" value="PURINE NUCLEOSIDE PHOSPHORYLASE DEOD-TYPE"/>
    <property type="match status" value="1"/>
</dbReference>
<dbReference type="PANTHER" id="PTHR43691">
    <property type="entry name" value="URIDINE PHOSPHORYLASE"/>
    <property type="match status" value="1"/>
</dbReference>
<dbReference type="Pfam" id="PF01048">
    <property type="entry name" value="PNP_UDP_1"/>
    <property type="match status" value="1"/>
</dbReference>
<dbReference type="SUPFAM" id="SSF53167">
    <property type="entry name" value="Purine and uridine phosphorylases"/>
    <property type="match status" value="1"/>
</dbReference>
<dbReference type="PROSITE" id="PS01232">
    <property type="entry name" value="PNP_UDP_1"/>
    <property type="match status" value="1"/>
</dbReference>
<evidence type="ECO:0000250" key="1">
    <source>
        <dbReference type="UniProtKB" id="P50389"/>
    </source>
</evidence>
<evidence type="ECO:0000255" key="2">
    <source>
        <dbReference type="HAMAP-Rule" id="MF_01627"/>
    </source>
</evidence>
<organism>
    <name type="scientific">Colwellia psychrerythraea (strain 34H / ATCC BAA-681)</name>
    <name type="common">Vibrio psychroerythus</name>
    <dbReference type="NCBI Taxonomy" id="167879"/>
    <lineage>
        <taxon>Bacteria</taxon>
        <taxon>Pseudomonadati</taxon>
        <taxon>Pseudomonadota</taxon>
        <taxon>Gammaproteobacteria</taxon>
        <taxon>Alteromonadales</taxon>
        <taxon>Colwelliaceae</taxon>
        <taxon>Colwellia</taxon>
    </lineage>
</organism>